<accession>B4F058</accession>
<reference key="1">
    <citation type="journal article" date="2008" name="J. Bacteriol.">
        <title>Complete genome sequence of uropathogenic Proteus mirabilis, a master of both adherence and motility.</title>
        <authorList>
            <person name="Pearson M.M."/>
            <person name="Sebaihia M."/>
            <person name="Churcher C."/>
            <person name="Quail M.A."/>
            <person name="Seshasayee A.S."/>
            <person name="Luscombe N.M."/>
            <person name="Abdellah Z."/>
            <person name="Arrosmith C."/>
            <person name="Atkin B."/>
            <person name="Chillingworth T."/>
            <person name="Hauser H."/>
            <person name="Jagels K."/>
            <person name="Moule S."/>
            <person name="Mungall K."/>
            <person name="Norbertczak H."/>
            <person name="Rabbinowitsch E."/>
            <person name="Walker D."/>
            <person name="Whithead S."/>
            <person name="Thomson N.R."/>
            <person name="Rather P.N."/>
            <person name="Parkhill J."/>
            <person name="Mobley H.L.T."/>
        </authorList>
    </citation>
    <scope>NUCLEOTIDE SEQUENCE [LARGE SCALE GENOMIC DNA]</scope>
    <source>
        <strain>HI4320</strain>
    </source>
</reference>
<gene>
    <name evidence="1" type="primary">ung</name>
    <name type="ordered locus">PMI1899</name>
</gene>
<sequence length="226" mass="25711">MTTPLTWHDVIGAEKEKPYFQQILSQVAQQRQAGKIIYPPQEDVFNAFRFTPFENVNVVILGQDPYHGPNQAHGLSFSVRPGVPAPPSLVNMYKELEQEYPDFKRPNHGYLESWAQQGVLLLNTVLTVEKGQAHSHANYGWEVFTDAVIEQINQRREGVIFLLWGAHAQKKGRFIDTNKHFILKAPHPSPLSAHRGFLGCGHFKQTNNLLAQQGRTPINWQLDPIE</sequence>
<evidence type="ECO:0000255" key="1">
    <source>
        <dbReference type="HAMAP-Rule" id="MF_00148"/>
    </source>
</evidence>
<dbReference type="EC" id="3.2.2.27" evidence="1"/>
<dbReference type="EMBL" id="AM942759">
    <property type="protein sequence ID" value="CAR43942.1"/>
    <property type="molecule type" value="Genomic_DNA"/>
</dbReference>
<dbReference type="RefSeq" id="WP_012368143.1">
    <property type="nucleotide sequence ID" value="NC_010554.1"/>
</dbReference>
<dbReference type="SMR" id="B4F058"/>
<dbReference type="EnsemblBacteria" id="CAR43942">
    <property type="protein sequence ID" value="CAR43942"/>
    <property type="gene ID" value="PMI1899"/>
</dbReference>
<dbReference type="GeneID" id="6803128"/>
<dbReference type="KEGG" id="pmr:PMI1899"/>
<dbReference type="PATRIC" id="fig|529507.6.peg.1851"/>
<dbReference type="eggNOG" id="COG0692">
    <property type="taxonomic scope" value="Bacteria"/>
</dbReference>
<dbReference type="HOGENOM" id="CLU_032162_3_0_6"/>
<dbReference type="Proteomes" id="UP000008319">
    <property type="component" value="Chromosome"/>
</dbReference>
<dbReference type="GO" id="GO:0005737">
    <property type="term" value="C:cytoplasm"/>
    <property type="evidence" value="ECO:0007669"/>
    <property type="project" value="UniProtKB-SubCell"/>
</dbReference>
<dbReference type="GO" id="GO:0004844">
    <property type="term" value="F:uracil DNA N-glycosylase activity"/>
    <property type="evidence" value="ECO:0007669"/>
    <property type="project" value="UniProtKB-UniRule"/>
</dbReference>
<dbReference type="GO" id="GO:0097510">
    <property type="term" value="P:base-excision repair, AP site formation via deaminated base removal"/>
    <property type="evidence" value="ECO:0007669"/>
    <property type="project" value="TreeGrafter"/>
</dbReference>
<dbReference type="CDD" id="cd10027">
    <property type="entry name" value="UDG-F1-like"/>
    <property type="match status" value="1"/>
</dbReference>
<dbReference type="FunFam" id="3.40.470.10:FF:000001">
    <property type="entry name" value="Uracil-DNA glycosylase"/>
    <property type="match status" value="1"/>
</dbReference>
<dbReference type="Gene3D" id="3.40.470.10">
    <property type="entry name" value="Uracil-DNA glycosylase-like domain"/>
    <property type="match status" value="1"/>
</dbReference>
<dbReference type="HAMAP" id="MF_00148">
    <property type="entry name" value="UDG"/>
    <property type="match status" value="1"/>
</dbReference>
<dbReference type="InterPro" id="IPR002043">
    <property type="entry name" value="UDG_fam1"/>
</dbReference>
<dbReference type="InterPro" id="IPR005122">
    <property type="entry name" value="Uracil-DNA_glycosylase-like"/>
</dbReference>
<dbReference type="InterPro" id="IPR036895">
    <property type="entry name" value="Uracil-DNA_glycosylase-like_sf"/>
</dbReference>
<dbReference type="NCBIfam" id="NF003588">
    <property type="entry name" value="PRK05254.1-1"/>
    <property type="match status" value="1"/>
</dbReference>
<dbReference type="NCBIfam" id="NF003589">
    <property type="entry name" value="PRK05254.1-2"/>
    <property type="match status" value="1"/>
</dbReference>
<dbReference type="NCBIfam" id="NF003591">
    <property type="entry name" value="PRK05254.1-4"/>
    <property type="match status" value="1"/>
</dbReference>
<dbReference type="NCBIfam" id="NF003592">
    <property type="entry name" value="PRK05254.1-5"/>
    <property type="match status" value="1"/>
</dbReference>
<dbReference type="NCBIfam" id="TIGR00628">
    <property type="entry name" value="ung"/>
    <property type="match status" value="1"/>
</dbReference>
<dbReference type="PANTHER" id="PTHR11264">
    <property type="entry name" value="URACIL-DNA GLYCOSYLASE"/>
    <property type="match status" value="1"/>
</dbReference>
<dbReference type="PANTHER" id="PTHR11264:SF0">
    <property type="entry name" value="URACIL-DNA GLYCOSYLASE"/>
    <property type="match status" value="1"/>
</dbReference>
<dbReference type="Pfam" id="PF03167">
    <property type="entry name" value="UDG"/>
    <property type="match status" value="1"/>
</dbReference>
<dbReference type="SMART" id="SM00986">
    <property type="entry name" value="UDG"/>
    <property type="match status" value="1"/>
</dbReference>
<dbReference type="SMART" id="SM00987">
    <property type="entry name" value="UreE_C"/>
    <property type="match status" value="1"/>
</dbReference>
<dbReference type="SUPFAM" id="SSF52141">
    <property type="entry name" value="Uracil-DNA glycosylase-like"/>
    <property type="match status" value="1"/>
</dbReference>
<keyword id="KW-0963">Cytoplasm</keyword>
<keyword id="KW-0227">DNA damage</keyword>
<keyword id="KW-0234">DNA repair</keyword>
<keyword id="KW-0378">Hydrolase</keyword>
<keyword id="KW-1185">Reference proteome</keyword>
<name>UNG_PROMH</name>
<feature type="chain" id="PRO_1000203378" description="Uracil-DNA glycosylase">
    <location>
        <begin position="1"/>
        <end position="226"/>
    </location>
</feature>
<feature type="active site" description="Proton acceptor" evidence="1">
    <location>
        <position position="64"/>
    </location>
</feature>
<comment type="function">
    <text evidence="1">Excises uracil residues from the DNA which can arise as a result of misincorporation of dUMP residues by DNA polymerase or due to deamination of cytosine.</text>
</comment>
<comment type="catalytic activity">
    <reaction evidence="1">
        <text>Hydrolyzes single-stranded DNA or mismatched double-stranded DNA and polynucleotides, releasing free uracil.</text>
        <dbReference type="EC" id="3.2.2.27"/>
    </reaction>
</comment>
<comment type="subcellular location">
    <subcellularLocation>
        <location evidence="1">Cytoplasm</location>
    </subcellularLocation>
</comment>
<comment type="similarity">
    <text evidence="1">Belongs to the uracil-DNA glycosylase (UDG) superfamily. UNG family.</text>
</comment>
<organism>
    <name type="scientific">Proteus mirabilis (strain HI4320)</name>
    <dbReference type="NCBI Taxonomy" id="529507"/>
    <lineage>
        <taxon>Bacteria</taxon>
        <taxon>Pseudomonadati</taxon>
        <taxon>Pseudomonadota</taxon>
        <taxon>Gammaproteobacteria</taxon>
        <taxon>Enterobacterales</taxon>
        <taxon>Morganellaceae</taxon>
        <taxon>Proteus</taxon>
    </lineage>
</organism>
<proteinExistence type="inferred from homology"/>
<protein>
    <recommendedName>
        <fullName evidence="1">Uracil-DNA glycosylase</fullName>
        <shortName evidence="1">UDG</shortName>
        <ecNumber evidence="1">3.2.2.27</ecNumber>
    </recommendedName>
</protein>